<protein>
    <recommendedName>
        <fullName>Abdominal ganglion neuropeptides L5-67</fullName>
    </recommendedName>
    <component>
        <recommendedName>
            <fullName>Luqin</fullName>
        </recommendedName>
    </component>
    <component>
        <recommendedName>
            <fullName>Luqin-B</fullName>
        </recommendedName>
    </component>
    <component>
        <recommendedName>
            <fullName>Luqin-C</fullName>
        </recommendedName>
    </component>
    <component>
        <recommendedName>
            <fullName>Proline-rich mature peptide</fullName>
            <shortName>PRMP</shortName>
        </recommendedName>
    </component>
</protein>
<dbReference type="EMBL" id="M13649">
    <property type="protein sequence ID" value="AAA27764.1"/>
    <property type="molecule type" value="mRNA"/>
</dbReference>
<dbReference type="PIR" id="A25458">
    <property type="entry name" value="A25458"/>
</dbReference>
<dbReference type="RefSeq" id="NP_001191480.1">
    <property type="nucleotide sequence ID" value="NM_001204551.1"/>
</dbReference>
<dbReference type="EnsemblMetazoa" id="NM_001204551.1">
    <property type="protein sequence ID" value="NP_001191480.1"/>
    <property type="gene ID" value="LOC100533239"/>
</dbReference>
<dbReference type="GeneID" id="100533239"/>
<dbReference type="OrthoDB" id="6071613at2759"/>
<dbReference type="Proteomes" id="UP000694888">
    <property type="component" value="Unplaced"/>
</dbReference>
<dbReference type="GO" id="GO:0005576">
    <property type="term" value="C:extracellular region"/>
    <property type="evidence" value="ECO:0007669"/>
    <property type="project" value="UniProtKB-SubCell"/>
</dbReference>
<dbReference type="GO" id="GO:0007218">
    <property type="term" value="P:neuropeptide signaling pathway"/>
    <property type="evidence" value="ECO:0007669"/>
    <property type="project" value="UniProtKB-KW"/>
</dbReference>
<dbReference type="InterPro" id="IPR016535">
    <property type="entry name" value="RFamide_neuropeptide_ACEP-1"/>
</dbReference>
<dbReference type="PIRSF" id="PIRSF008109">
    <property type="entry name" value="RFamide_neuropeptide_ACEP-1"/>
    <property type="match status" value="1"/>
</dbReference>
<comment type="subcellular location">
    <subcellularLocation>
        <location>Secreted</location>
    </subcellularLocation>
</comment>
<comment type="tissue specificity">
    <text>Neurons L2-4 and L6, also called giant dorsal LUQ (Left Upper Quadrant) neurons of the abdominal ganglion. Also expressed in smaller neurons in the CNS and in peripheral organs such as the kidney.</text>
</comment>
<comment type="PTM">
    <text evidence="2">The prohormone is proteolytically cleaved in 2 steps, yielding first 2 products: luqin and PRMP. In the second step, PRMP is cleaved to yield luqin-B and luqin-C.</text>
</comment>
<comment type="mass spectrometry">
    <molecule>Luqin</molecule>
</comment>
<comment type="mass spectrometry">
    <molecule>Proline-rich mature peptide</molecule>
</comment>
<comment type="mass spectrometry">
    <molecule>Luqin-B</molecule>
</comment>
<comment type="mass spectrometry">
    <molecule>Luqin-C</molecule>
</comment>
<comment type="caution">
    <text evidence="3">Was previously thought to be expressed in L5.</text>
</comment>
<keyword id="KW-0027">Amidation</keyword>
<keyword id="KW-0165">Cleavage on pair of basic residues</keyword>
<keyword id="KW-0903">Direct protein sequencing</keyword>
<keyword id="KW-0527">Neuropeptide</keyword>
<keyword id="KW-0964">Secreted</keyword>
<keyword id="KW-0732">Signal</keyword>
<feature type="signal peptide" evidence="1">
    <location>
        <begin position="1"/>
        <end position="23"/>
    </location>
</feature>
<feature type="peptide" id="PRO_0000001788" description="Luqin">
    <location>
        <begin position="24"/>
        <end position="33"/>
    </location>
</feature>
<feature type="peptide" id="PRO_0000001789" description="Proline-rich mature peptide">
    <location>
        <begin position="37"/>
        <end position="112"/>
    </location>
</feature>
<feature type="peptide" id="PRO_0000001790" description="Luqin-B">
    <location>
        <begin position="37"/>
        <end position="65"/>
    </location>
</feature>
<feature type="peptide" id="PRO_0000001791" description="Luqin-C">
    <location>
        <begin position="66"/>
        <end position="112"/>
    </location>
</feature>
<feature type="modified residue" description="Phenylalanine amide" evidence="1">
    <location>
        <position position="33"/>
    </location>
</feature>
<accession>P07712</accession>
<evidence type="ECO:0000269" key="1">
    <source>
    </source>
</evidence>
<evidence type="ECO:0000269" key="2">
    <source>
    </source>
</evidence>
<evidence type="ECO:0000305" key="3"/>
<sequence>MKTAVLLVCLAYVMAAILSLCASAPSWRPQGRFGKRTIPDRLPQTEESSLPDFGFSHLPALPLELFYNPRDLVHSGFRPRLCSVSGVEGYPPCVESHSDRKMKNLLDDLFGL</sequence>
<proteinExistence type="evidence at protein level"/>
<name>AGN5_APLCA</name>
<organism>
    <name type="scientific">Aplysia californica</name>
    <name type="common">California sea hare</name>
    <dbReference type="NCBI Taxonomy" id="6500"/>
    <lineage>
        <taxon>Eukaryota</taxon>
        <taxon>Metazoa</taxon>
        <taxon>Spiralia</taxon>
        <taxon>Lophotrochozoa</taxon>
        <taxon>Mollusca</taxon>
        <taxon>Gastropoda</taxon>
        <taxon>Heterobranchia</taxon>
        <taxon>Euthyneura</taxon>
        <taxon>Tectipleura</taxon>
        <taxon>Aplysiida</taxon>
        <taxon>Aplysioidea</taxon>
        <taxon>Aplysiidae</taxon>
        <taxon>Aplysia</taxon>
    </lineage>
</organism>
<reference key="1">
    <citation type="journal article" date="1986" name="DNA">
        <title>A neuropeptide precursor expressed in Aplysia neuron L5.</title>
        <authorList>
            <person name="Shyamala M."/>
            <person name="Fisher J.M."/>
            <person name="Scheller R.H."/>
        </authorList>
    </citation>
    <scope>NUCLEOTIDE SEQUENCE [MRNA]</scope>
</reference>
<reference key="2">
    <citation type="journal article" date="1995" name="Peptides">
        <title>Processing of the L5-67 precursor peptide and characterization of LUQIN in the LUQ neurons of Aplysia californica.</title>
        <authorList>
            <person name="Aloyz R.S."/>
            <person name="DesGroseillers L."/>
        </authorList>
    </citation>
    <scope>CHARACTERIZATION</scope>
    <scope>PROTEIN SEQUENCE OF 24-33</scope>
    <scope>AMIDATION AT PHE-33</scope>
</reference>
<reference key="3">
    <citation type="journal article" date="1998" name="Peptides">
        <title>Mass spectrometric survey of interganglionically transported peptides in Aplysia.</title>
        <authorList>
            <person name="Li L."/>
            <person name="Moroz T.P."/>
            <person name="Garden R.W."/>
            <person name="Floyd P.D."/>
            <person name="Weiss K.R."/>
            <person name="Sweedler J.V."/>
        </authorList>
    </citation>
    <scope>MASS SPECTROMETRY</scope>
    <scope>PROTEOLYTIC PROCESSING</scope>
</reference>